<organism>
    <name type="scientific">Chlorobium phaeobacteroides (strain DSM 266 / SMG 266 / 2430)</name>
    <dbReference type="NCBI Taxonomy" id="290317"/>
    <lineage>
        <taxon>Bacteria</taxon>
        <taxon>Pseudomonadati</taxon>
        <taxon>Chlorobiota</taxon>
        <taxon>Chlorobiia</taxon>
        <taxon>Chlorobiales</taxon>
        <taxon>Chlorobiaceae</taxon>
        <taxon>Chlorobium/Pelodictyon group</taxon>
        <taxon>Chlorobium</taxon>
    </lineage>
</organism>
<protein>
    <recommendedName>
        <fullName evidence="2">Small ribosomal subunit protein uS12</fullName>
    </recommendedName>
    <alternativeName>
        <fullName evidence="4">30S ribosomal protein S12</fullName>
    </alternativeName>
</protein>
<proteinExistence type="inferred from homology"/>
<name>RS12_CHLPD</name>
<comment type="function">
    <text evidence="2">With S4 and S5 plays an important role in translational accuracy.</text>
</comment>
<comment type="function">
    <text evidence="2">Interacts with and stabilizes bases of the 16S rRNA that are involved in tRNA selection in the A site and with the mRNA backbone. Located at the interface of the 30S and 50S subunits, it traverses the body of the 30S subunit contacting proteins on the other side and probably holding the rRNA structure together. The combined cluster of proteins S8, S12 and S17 appears to hold together the shoulder and platform of the 30S subunit.</text>
</comment>
<comment type="subunit">
    <text evidence="2">Part of the 30S ribosomal subunit. Contacts proteins S8 and S17. May interact with IF1 in the 30S initiation complex.</text>
</comment>
<comment type="similarity">
    <text evidence="2">Belongs to the universal ribosomal protein uS12 family.</text>
</comment>
<keyword id="KW-0488">Methylation</keyword>
<keyword id="KW-1185">Reference proteome</keyword>
<keyword id="KW-0687">Ribonucleoprotein</keyword>
<keyword id="KW-0689">Ribosomal protein</keyword>
<keyword id="KW-0694">RNA-binding</keyword>
<keyword id="KW-0699">rRNA-binding</keyword>
<keyword id="KW-0820">tRNA-binding</keyword>
<reference key="1">
    <citation type="submission" date="2006-12" db="EMBL/GenBank/DDBJ databases">
        <title>Complete sequence of Chlorobium phaeobacteroides DSM 266.</title>
        <authorList>
            <consortium name="US DOE Joint Genome Institute"/>
            <person name="Copeland A."/>
            <person name="Lucas S."/>
            <person name="Lapidus A."/>
            <person name="Barry K."/>
            <person name="Detter J.C."/>
            <person name="Glavina del Rio T."/>
            <person name="Hammon N."/>
            <person name="Israni S."/>
            <person name="Pitluck S."/>
            <person name="Goltsman E."/>
            <person name="Schmutz J."/>
            <person name="Larimer F."/>
            <person name="Land M."/>
            <person name="Hauser L."/>
            <person name="Mikhailova N."/>
            <person name="Li T."/>
            <person name="Overmann J."/>
            <person name="Bryant D.A."/>
            <person name="Richardson P."/>
        </authorList>
    </citation>
    <scope>NUCLEOTIDE SEQUENCE [LARGE SCALE GENOMIC DNA]</scope>
    <source>
        <strain>DSM 266 / SMG 266 / 2430</strain>
    </source>
</reference>
<dbReference type="EMBL" id="CP000492">
    <property type="protein sequence ID" value="ABL66416.1"/>
    <property type="molecule type" value="Genomic_DNA"/>
</dbReference>
<dbReference type="RefSeq" id="WP_011746198.1">
    <property type="nucleotide sequence ID" value="NC_008639.1"/>
</dbReference>
<dbReference type="SMR" id="A1BJ39"/>
<dbReference type="STRING" id="290317.Cpha266_2428"/>
<dbReference type="KEGG" id="cph:Cpha266_2428"/>
<dbReference type="eggNOG" id="COG0048">
    <property type="taxonomic scope" value="Bacteria"/>
</dbReference>
<dbReference type="HOGENOM" id="CLU_104295_1_2_10"/>
<dbReference type="OrthoDB" id="9802366at2"/>
<dbReference type="Proteomes" id="UP000008701">
    <property type="component" value="Chromosome"/>
</dbReference>
<dbReference type="GO" id="GO:0015935">
    <property type="term" value="C:small ribosomal subunit"/>
    <property type="evidence" value="ECO:0007669"/>
    <property type="project" value="InterPro"/>
</dbReference>
<dbReference type="GO" id="GO:0019843">
    <property type="term" value="F:rRNA binding"/>
    <property type="evidence" value="ECO:0007669"/>
    <property type="project" value="UniProtKB-UniRule"/>
</dbReference>
<dbReference type="GO" id="GO:0003735">
    <property type="term" value="F:structural constituent of ribosome"/>
    <property type="evidence" value="ECO:0007669"/>
    <property type="project" value="InterPro"/>
</dbReference>
<dbReference type="GO" id="GO:0000049">
    <property type="term" value="F:tRNA binding"/>
    <property type="evidence" value="ECO:0007669"/>
    <property type="project" value="UniProtKB-UniRule"/>
</dbReference>
<dbReference type="GO" id="GO:0006412">
    <property type="term" value="P:translation"/>
    <property type="evidence" value="ECO:0007669"/>
    <property type="project" value="UniProtKB-UniRule"/>
</dbReference>
<dbReference type="CDD" id="cd03368">
    <property type="entry name" value="Ribosomal_S12"/>
    <property type="match status" value="1"/>
</dbReference>
<dbReference type="FunFam" id="2.40.50.140:FF:000001">
    <property type="entry name" value="30S ribosomal protein S12"/>
    <property type="match status" value="1"/>
</dbReference>
<dbReference type="Gene3D" id="2.40.50.140">
    <property type="entry name" value="Nucleic acid-binding proteins"/>
    <property type="match status" value="1"/>
</dbReference>
<dbReference type="HAMAP" id="MF_00403_B">
    <property type="entry name" value="Ribosomal_uS12_B"/>
    <property type="match status" value="1"/>
</dbReference>
<dbReference type="InterPro" id="IPR012340">
    <property type="entry name" value="NA-bd_OB-fold"/>
</dbReference>
<dbReference type="InterPro" id="IPR006032">
    <property type="entry name" value="Ribosomal_uS12"/>
</dbReference>
<dbReference type="InterPro" id="IPR005679">
    <property type="entry name" value="Ribosomal_uS12_bac"/>
</dbReference>
<dbReference type="NCBIfam" id="TIGR00981">
    <property type="entry name" value="rpsL_bact"/>
    <property type="match status" value="1"/>
</dbReference>
<dbReference type="PANTHER" id="PTHR11652">
    <property type="entry name" value="30S RIBOSOMAL PROTEIN S12 FAMILY MEMBER"/>
    <property type="match status" value="1"/>
</dbReference>
<dbReference type="Pfam" id="PF00164">
    <property type="entry name" value="Ribosom_S12_S23"/>
    <property type="match status" value="1"/>
</dbReference>
<dbReference type="PIRSF" id="PIRSF002133">
    <property type="entry name" value="Ribosomal_S12/S23"/>
    <property type="match status" value="1"/>
</dbReference>
<dbReference type="PRINTS" id="PR01034">
    <property type="entry name" value="RIBOSOMALS12"/>
</dbReference>
<dbReference type="SUPFAM" id="SSF50249">
    <property type="entry name" value="Nucleic acid-binding proteins"/>
    <property type="match status" value="1"/>
</dbReference>
<dbReference type="PROSITE" id="PS00055">
    <property type="entry name" value="RIBOSOMAL_S12"/>
    <property type="match status" value="1"/>
</dbReference>
<sequence>MPTIQQLIRSGRSIKASKTASPALEKCPQKRGVCTRVYTTTPKKPNSALRKVARVRLSNKIEVTAYIPGEGHNLQEHSIVLIRGGRVKDLPGVRYHIVRGSLDTSGVADRKQSRSKYGAKQPKAGAAAPVKGKRR</sequence>
<feature type="chain" id="PRO_0000295966" description="Small ribosomal subunit protein uS12">
    <location>
        <begin position="1"/>
        <end position="135"/>
    </location>
</feature>
<feature type="region of interest" description="Disordered" evidence="3">
    <location>
        <begin position="101"/>
        <end position="135"/>
    </location>
</feature>
<feature type="compositionally biased region" description="Low complexity" evidence="3">
    <location>
        <begin position="116"/>
        <end position="135"/>
    </location>
</feature>
<feature type="modified residue" description="3-methylthioaspartic acid" evidence="1">
    <location>
        <position position="89"/>
    </location>
</feature>
<accession>A1BJ39</accession>
<evidence type="ECO:0000250" key="1"/>
<evidence type="ECO:0000255" key="2">
    <source>
        <dbReference type="HAMAP-Rule" id="MF_00403"/>
    </source>
</evidence>
<evidence type="ECO:0000256" key="3">
    <source>
        <dbReference type="SAM" id="MobiDB-lite"/>
    </source>
</evidence>
<evidence type="ECO:0000305" key="4"/>
<gene>
    <name evidence="2" type="primary">rpsL</name>
    <name type="ordered locus">Cpha266_2428</name>
</gene>